<dbReference type="BMRB" id="P0CH75"/>
<dbReference type="SMR" id="P0CH75"/>
<dbReference type="GO" id="GO:0005576">
    <property type="term" value="C:extracellular region"/>
    <property type="evidence" value="ECO:0007669"/>
    <property type="project" value="UniProtKB-SubCell"/>
</dbReference>
<dbReference type="GO" id="GO:0015459">
    <property type="term" value="F:potassium channel regulator activity"/>
    <property type="evidence" value="ECO:0007669"/>
    <property type="project" value="UniProtKB-KW"/>
</dbReference>
<dbReference type="GO" id="GO:0004867">
    <property type="term" value="F:serine-type endopeptidase inhibitor activity"/>
    <property type="evidence" value="ECO:0007669"/>
    <property type="project" value="UniProtKB-KW"/>
</dbReference>
<dbReference type="GO" id="GO:0090729">
    <property type="term" value="F:toxin activity"/>
    <property type="evidence" value="ECO:0007669"/>
    <property type="project" value="UniProtKB-KW"/>
</dbReference>
<dbReference type="GO" id="GO:0044562">
    <property type="term" value="P:envenomation resulting in negative regulation of voltage-gated potassium channel activity in another organism"/>
    <property type="evidence" value="ECO:0007669"/>
    <property type="project" value="UniProtKB-ARBA"/>
</dbReference>
<dbReference type="Gene3D" id="4.10.410.10">
    <property type="entry name" value="Pancreatic trypsin inhibitor Kunitz domain"/>
    <property type="match status" value="1"/>
</dbReference>
<dbReference type="InterPro" id="IPR002223">
    <property type="entry name" value="Kunitz_BPTI"/>
</dbReference>
<dbReference type="InterPro" id="IPR036880">
    <property type="entry name" value="Kunitz_BPTI_sf"/>
</dbReference>
<dbReference type="Pfam" id="PF00014">
    <property type="entry name" value="Kunitz_BPTI"/>
    <property type="match status" value="1"/>
</dbReference>
<dbReference type="SUPFAM" id="SSF57362">
    <property type="entry name" value="BPTI-like"/>
    <property type="match status" value="1"/>
</dbReference>
<evidence type="ECO:0000250" key="1"/>
<evidence type="ECO:0000250" key="2">
    <source>
        <dbReference type="UniProtKB" id="P68425"/>
    </source>
</evidence>
<evidence type="ECO:0000255" key="3">
    <source>
        <dbReference type="PROSITE-ProRule" id="PRU00031"/>
    </source>
</evidence>
<evidence type="ECO:0000269" key="4">
    <source>
    </source>
</evidence>
<evidence type="ECO:0000305" key="5"/>
<evidence type="ECO:0000305" key="6">
    <source>
    </source>
</evidence>
<organism>
    <name type="scientific">Cyriopagopus hainanus</name>
    <name type="common">Chinese bird spider</name>
    <name type="synonym">Haplopelma hainanum</name>
    <dbReference type="NCBI Taxonomy" id="209901"/>
    <lineage>
        <taxon>Eukaryota</taxon>
        <taxon>Metazoa</taxon>
        <taxon>Ecdysozoa</taxon>
        <taxon>Arthropoda</taxon>
        <taxon>Chelicerata</taxon>
        <taxon>Arachnida</taxon>
        <taxon>Araneae</taxon>
        <taxon>Mygalomorphae</taxon>
        <taxon>Theraphosidae</taxon>
        <taxon>Haplopelma</taxon>
    </lineage>
</organism>
<keyword id="KW-0903">Direct protein sequencing</keyword>
<keyword id="KW-0646">Protease inhibitor</keyword>
<keyword id="KW-0964">Secreted</keyword>
<keyword id="KW-0722">Serine protease inhibitor</keyword>
<name>VKT25_CYRHA</name>
<comment type="function">
    <text evidence="2">Serine protease inhibitor that inhibits trypsin at a molar ratio of 1:1.</text>
</comment>
<comment type="subcellular location">
    <subcellularLocation>
        <location evidence="4">Secreted</location>
    </subcellularLocation>
</comment>
<comment type="tissue specificity">
    <text evidence="6">Expressed by the venom gland.</text>
</comment>
<comment type="similarity">
    <text evidence="5">Belongs to the venom Kunitz-type family. 02 (native) subfamily.</text>
</comment>
<sequence length="33" mass="3918">IDTCRLPSDRGRCKASFERWYFNGRTCAKFIYG</sequence>
<protein>
    <recommendedName>
        <fullName>Kunitz-type serine protease inhibitor hainantoxin F7-25.66</fullName>
    </recommendedName>
    <alternativeName>
        <fullName>Peptide F7-25.66</fullName>
    </alternativeName>
</protein>
<reference key="1">
    <citation type="journal article" date="2010" name="J. Proteome Res.">
        <title>Molecular diversification of peptide toxins from the tarantula Haplopelma hainanum (Ornithoctonus hainana) venom based on transcriptomic, peptidomic, and genomic analyses.</title>
        <authorList>
            <person name="Tang X."/>
            <person name="Zhang Y."/>
            <person name="Hu W."/>
            <person name="Xu D."/>
            <person name="Tao H."/>
            <person name="Yang X."/>
            <person name="Li Y."/>
            <person name="Jiang L."/>
            <person name="Liang S."/>
        </authorList>
    </citation>
    <scope>PROTEIN SEQUENCE</scope>
    <scope>IDENTIFICATION BY MASS SPECTROMETRY</scope>
    <scope>SUBCELLULAR LOCATION</scope>
    <source>
        <tissue>Venom</tissue>
    </source>
</reference>
<feature type="peptide" id="PRO_0000401014" description="Kunitz-type serine protease inhibitor hainantoxin F7-25.66">
    <location>
        <begin position="1"/>
        <end position="33" status="greater than"/>
    </location>
</feature>
<feature type="domain" description="BPTI/Kunitz inhibitor" evidence="3">
    <location>
        <begin position="4"/>
        <end position="33" status="greater than"/>
    </location>
</feature>
<feature type="site" description="Reactive bond for trypsin" evidence="1">
    <location>
        <begin position="14"/>
        <end position="15"/>
    </location>
</feature>
<feature type="non-terminal residue">
    <location>
        <position position="33"/>
    </location>
</feature>
<proteinExistence type="evidence at protein level"/>
<accession>P0CH75</accession>